<dbReference type="EMBL" id="CP000095">
    <property type="protein sequence ID" value="AAZ58749.1"/>
    <property type="molecule type" value="Genomic_DNA"/>
</dbReference>
<dbReference type="RefSeq" id="WP_011295603.1">
    <property type="nucleotide sequence ID" value="NC_007335.2"/>
</dbReference>
<dbReference type="SMR" id="Q46IC9"/>
<dbReference type="STRING" id="59920.PMN2A_1259"/>
<dbReference type="KEGG" id="pmn:PMN2A_1259"/>
<dbReference type="HOGENOM" id="CLU_169643_4_0_3"/>
<dbReference type="OrthoDB" id="47476at2"/>
<dbReference type="PhylomeDB" id="Q46IC9"/>
<dbReference type="Proteomes" id="UP000002535">
    <property type="component" value="Chromosome"/>
</dbReference>
<dbReference type="GO" id="GO:0022625">
    <property type="term" value="C:cytosolic large ribosomal subunit"/>
    <property type="evidence" value="ECO:0007669"/>
    <property type="project" value="TreeGrafter"/>
</dbReference>
<dbReference type="GO" id="GO:0003735">
    <property type="term" value="F:structural constituent of ribosome"/>
    <property type="evidence" value="ECO:0007669"/>
    <property type="project" value="InterPro"/>
</dbReference>
<dbReference type="GO" id="GO:0006412">
    <property type="term" value="P:translation"/>
    <property type="evidence" value="ECO:0007669"/>
    <property type="project" value="UniProtKB-UniRule"/>
</dbReference>
<dbReference type="FunFam" id="4.10.410.60:FF:000001">
    <property type="entry name" value="50S ribosomal protein L35"/>
    <property type="match status" value="1"/>
</dbReference>
<dbReference type="Gene3D" id="4.10.410.60">
    <property type="match status" value="1"/>
</dbReference>
<dbReference type="HAMAP" id="MF_00514">
    <property type="entry name" value="Ribosomal_bL35"/>
    <property type="match status" value="1"/>
</dbReference>
<dbReference type="InterPro" id="IPR001706">
    <property type="entry name" value="Ribosomal_bL35"/>
</dbReference>
<dbReference type="InterPro" id="IPR021137">
    <property type="entry name" value="Ribosomal_bL35-like"/>
</dbReference>
<dbReference type="InterPro" id="IPR018265">
    <property type="entry name" value="Ribosomal_bL35_CS"/>
</dbReference>
<dbReference type="InterPro" id="IPR037229">
    <property type="entry name" value="Ribosomal_bL35_sf"/>
</dbReference>
<dbReference type="NCBIfam" id="TIGR00001">
    <property type="entry name" value="rpmI_bact"/>
    <property type="match status" value="1"/>
</dbReference>
<dbReference type="PANTHER" id="PTHR33343">
    <property type="entry name" value="54S RIBOSOMAL PROTEIN BL35M"/>
    <property type="match status" value="1"/>
</dbReference>
<dbReference type="PANTHER" id="PTHR33343:SF1">
    <property type="entry name" value="LARGE RIBOSOMAL SUBUNIT PROTEIN BL35M"/>
    <property type="match status" value="1"/>
</dbReference>
<dbReference type="Pfam" id="PF01632">
    <property type="entry name" value="Ribosomal_L35p"/>
    <property type="match status" value="1"/>
</dbReference>
<dbReference type="PRINTS" id="PR00064">
    <property type="entry name" value="RIBOSOMALL35"/>
</dbReference>
<dbReference type="SUPFAM" id="SSF143034">
    <property type="entry name" value="L35p-like"/>
    <property type="match status" value="1"/>
</dbReference>
<dbReference type="PROSITE" id="PS00936">
    <property type="entry name" value="RIBOSOMAL_L35"/>
    <property type="match status" value="1"/>
</dbReference>
<feature type="chain" id="PRO_0000258724" description="Large ribosomal subunit protein bL35">
    <location>
        <begin position="1"/>
        <end position="65"/>
    </location>
</feature>
<name>RL35_PROMT</name>
<accession>Q46IC9</accession>
<sequence length="65" mass="7611">MPKLKTRKAAAKRFKATGTGKFMRRRAFHNHLLDHKSPKLKRHLKTKAVVDERDAENVRLMLPYA</sequence>
<organism>
    <name type="scientific">Prochlorococcus marinus (strain NATL2A)</name>
    <dbReference type="NCBI Taxonomy" id="59920"/>
    <lineage>
        <taxon>Bacteria</taxon>
        <taxon>Bacillati</taxon>
        <taxon>Cyanobacteriota</taxon>
        <taxon>Cyanophyceae</taxon>
        <taxon>Synechococcales</taxon>
        <taxon>Prochlorococcaceae</taxon>
        <taxon>Prochlorococcus</taxon>
    </lineage>
</organism>
<evidence type="ECO:0000255" key="1">
    <source>
        <dbReference type="HAMAP-Rule" id="MF_00514"/>
    </source>
</evidence>
<evidence type="ECO:0000305" key="2"/>
<gene>
    <name evidence="1" type="primary">rpmI</name>
    <name evidence="1" type="synonym">rpl35</name>
    <name type="ordered locus">PMN2A_1259</name>
</gene>
<comment type="similarity">
    <text evidence="1">Belongs to the bacterial ribosomal protein bL35 family.</text>
</comment>
<keyword id="KW-1185">Reference proteome</keyword>
<keyword id="KW-0687">Ribonucleoprotein</keyword>
<keyword id="KW-0689">Ribosomal protein</keyword>
<protein>
    <recommendedName>
        <fullName evidence="1">Large ribosomal subunit protein bL35</fullName>
    </recommendedName>
    <alternativeName>
        <fullName evidence="2">50S ribosomal protein L35</fullName>
    </alternativeName>
</protein>
<proteinExistence type="inferred from homology"/>
<reference key="1">
    <citation type="journal article" date="2007" name="PLoS Genet.">
        <title>Patterns and implications of gene gain and loss in the evolution of Prochlorococcus.</title>
        <authorList>
            <person name="Kettler G.C."/>
            <person name="Martiny A.C."/>
            <person name="Huang K."/>
            <person name="Zucker J."/>
            <person name="Coleman M.L."/>
            <person name="Rodrigue S."/>
            <person name="Chen F."/>
            <person name="Lapidus A."/>
            <person name="Ferriera S."/>
            <person name="Johnson J."/>
            <person name="Steglich C."/>
            <person name="Church G.M."/>
            <person name="Richardson P."/>
            <person name="Chisholm S.W."/>
        </authorList>
    </citation>
    <scope>NUCLEOTIDE SEQUENCE [LARGE SCALE GENOMIC DNA]</scope>
    <source>
        <strain>NATL2A</strain>
    </source>
</reference>